<reference key="1">
    <citation type="journal article" date="1997" name="Plant Mol. Biol.">
        <title>Interaction of rice and human SRP19 polypeptides with signal recognition particle RNA.</title>
        <authorList>
            <person name="Chittenden K."/>
            <person name="Gowda K."/>
            <person name="Black S.D."/>
            <person name="Zwieb C."/>
        </authorList>
    </citation>
    <scope>NUCLEOTIDE SEQUENCE [MRNA]</scope>
    <scope>MUTAGENESIS OF ARG-31 AND ARG-32</scope>
    <source>
        <strain>cv. Nipponbare</strain>
        <tissue>Callus</tissue>
    </source>
</reference>
<reference key="2">
    <citation type="journal article" date="2005" name="Nature">
        <title>The map-based sequence of the rice genome.</title>
        <authorList>
            <consortium name="International rice genome sequencing project (IRGSP)"/>
        </authorList>
    </citation>
    <scope>NUCLEOTIDE SEQUENCE [LARGE SCALE GENOMIC DNA]</scope>
    <source>
        <strain>cv. Nipponbare</strain>
    </source>
</reference>
<reference key="3">
    <citation type="journal article" date="2008" name="Nucleic Acids Res.">
        <title>The rice annotation project database (RAP-DB): 2008 update.</title>
        <authorList>
            <consortium name="The rice annotation project (RAP)"/>
        </authorList>
    </citation>
    <scope>GENOME REANNOTATION</scope>
    <source>
        <strain>cv. Nipponbare</strain>
    </source>
</reference>
<reference key="4">
    <citation type="journal article" date="2013" name="Rice">
        <title>Improvement of the Oryza sativa Nipponbare reference genome using next generation sequence and optical map data.</title>
        <authorList>
            <person name="Kawahara Y."/>
            <person name="de la Bastide M."/>
            <person name="Hamilton J.P."/>
            <person name="Kanamori H."/>
            <person name="McCombie W.R."/>
            <person name="Ouyang S."/>
            <person name="Schwartz D.C."/>
            <person name="Tanaka T."/>
            <person name="Wu J."/>
            <person name="Zhou S."/>
            <person name="Childs K.L."/>
            <person name="Davidson R.M."/>
            <person name="Lin H."/>
            <person name="Quesada-Ocampo L."/>
            <person name="Vaillancourt B."/>
            <person name="Sakai H."/>
            <person name="Lee S.S."/>
            <person name="Kim J."/>
            <person name="Numa H."/>
            <person name="Itoh T."/>
            <person name="Buell C.R."/>
            <person name="Matsumoto T."/>
        </authorList>
    </citation>
    <scope>GENOME REANNOTATION</scope>
    <source>
        <strain>cv. Nipponbare</strain>
    </source>
</reference>
<reference key="5">
    <citation type="journal article" date="2003" name="Science">
        <title>Collection, mapping, and annotation of over 28,000 cDNA clones from japonica rice.</title>
        <authorList>
            <consortium name="The rice full-length cDNA consortium"/>
        </authorList>
    </citation>
    <scope>NUCLEOTIDE SEQUENCE [LARGE SCALE MRNA]</scope>
    <source>
        <strain>cv. Nipponbare</strain>
    </source>
</reference>
<keyword id="KW-0963">Cytoplasm</keyword>
<keyword id="KW-0539">Nucleus</keyword>
<keyword id="KW-1185">Reference proteome</keyword>
<keyword id="KW-0687">Ribonucleoprotein</keyword>
<keyword id="KW-0694">RNA-binding</keyword>
<keyword id="KW-0733">Signal recognition particle</keyword>
<accession>P49964</accession>
<accession>Q0DCD9</accession>
<accession>Q5Z9Y1</accession>
<dbReference type="EMBL" id="U19030">
    <property type="protein sequence ID" value="AAB65810.1"/>
    <property type="molecule type" value="mRNA"/>
</dbReference>
<dbReference type="EMBL" id="AP003506">
    <property type="protein sequence ID" value="BAD61555.1"/>
    <property type="molecule type" value="Genomic_DNA"/>
</dbReference>
<dbReference type="EMBL" id="AP003572">
    <property type="protein sequence ID" value="BAD61629.1"/>
    <property type="molecule type" value="Genomic_DNA"/>
</dbReference>
<dbReference type="EMBL" id="AP008212">
    <property type="protein sequence ID" value="BAF19484.1"/>
    <property type="molecule type" value="Genomic_DNA"/>
</dbReference>
<dbReference type="EMBL" id="AP014962">
    <property type="protein sequence ID" value="BAS97630.1"/>
    <property type="molecule type" value="Genomic_DNA"/>
</dbReference>
<dbReference type="EMBL" id="AK059915">
    <property type="protein sequence ID" value="BAG87210.1"/>
    <property type="molecule type" value="mRNA"/>
</dbReference>
<dbReference type="PIR" id="T03292">
    <property type="entry name" value="T03292"/>
</dbReference>
<dbReference type="RefSeq" id="XP_015641044.1">
    <property type="nucleotide sequence ID" value="XM_015785558.1"/>
</dbReference>
<dbReference type="SMR" id="P49964"/>
<dbReference type="FunCoup" id="P49964">
    <property type="interactions" value="2571"/>
</dbReference>
<dbReference type="STRING" id="39947.P49964"/>
<dbReference type="PaxDb" id="39947-P49964"/>
<dbReference type="EnsemblPlants" id="Os06t0342100-01">
    <property type="protein sequence ID" value="Os06t0342100-01"/>
    <property type="gene ID" value="Os06g0342100"/>
</dbReference>
<dbReference type="Gramene" id="Os06t0342100-01">
    <property type="protein sequence ID" value="Os06t0342100-01"/>
    <property type="gene ID" value="Os06g0342100"/>
</dbReference>
<dbReference type="KEGG" id="dosa:Os06g0342100"/>
<dbReference type="eggNOG" id="KOG3198">
    <property type="taxonomic scope" value="Eukaryota"/>
</dbReference>
<dbReference type="HOGENOM" id="CLU_064201_1_2_1"/>
<dbReference type="InParanoid" id="P49964"/>
<dbReference type="OMA" id="QMERWIC"/>
<dbReference type="OrthoDB" id="2190947at2759"/>
<dbReference type="Proteomes" id="UP000000763">
    <property type="component" value="Chromosome 6"/>
</dbReference>
<dbReference type="Proteomes" id="UP000059680">
    <property type="component" value="Chromosome 6"/>
</dbReference>
<dbReference type="GO" id="GO:0005730">
    <property type="term" value="C:nucleolus"/>
    <property type="evidence" value="ECO:0007669"/>
    <property type="project" value="UniProtKB-SubCell"/>
</dbReference>
<dbReference type="GO" id="GO:0005786">
    <property type="term" value="C:signal recognition particle, endoplasmic reticulum targeting"/>
    <property type="evidence" value="ECO:0000318"/>
    <property type="project" value="GO_Central"/>
</dbReference>
<dbReference type="GO" id="GO:0008312">
    <property type="term" value="F:7S RNA binding"/>
    <property type="evidence" value="ECO:0000318"/>
    <property type="project" value="GO_Central"/>
</dbReference>
<dbReference type="GO" id="GO:0006617">
    <property type="term" value="P:SRP-dependent cotranslational protein targeting to membrane, signal sequence recognition"/>
    <property type="evidence" value="ECO:0000318"/>
    <property type="project" value="GO_Central"/>
</dbReference>
<dbReference type="FunFam" id="3.30.56.30:FF:000002">
    <property type="entry name" value="Signal recognition particle 19kDa"/>
    <property type="match status" value="1"/>
</dbReference>
<dbReference type="Gene3D" id="3.30.56.30">
    <property type="entry name" value="Signal recognition particle, SRP19-like subunit"/>
    <property type="match status" value="1"/>
</dbReference>
<dbReference type="InterPro" id="IPR002778">
    <property type="entry name" value="Signal_recog_particle_SRP19"/>
</dbReference>
<dbReference type="InterPro" id="IPR036521">
    <property type="entry name" value="SRP19-like_sf"/>
</dbReference>
<dbReference type="PANTHER" id="PTHR17453">
    <property type="entry name" value="SIGNAL RECOGNITION PARTICLE 19 KD PROTEIN"/>
    <property type="match status" value="1"/>
</dbReference>
<dbReference type="PANTHER" id="PTHR17453:SF0">
    <property type="entry name" value="SIGNAL RECOGNITION PARTICLE 19 KDA PROTEIN"/>
    <property type="match status" value="1"/>
</dbReference>
<dbReference type="Pfam" id="PF01922">
    <property type="entry name" value="SRP19"/>
    <property type="match status" value="1"/>
</dbReference>
<dbReference type="SUPFAM" id="SSF69695">
    <property type="entry name" value="SRP19"/>
    <property type="match status" value="1"/>
</dbReference>
<evidence type="ECO:0000250" key="1">
    <source>
        <dbReference type="UniProtKB" id="J9PAS6"/>
    </source>
</evidence>
<evidence type="ECO:0000250" key="2">
    <source>
        <dbReference type="UniProtKB" id="P09132"/>
    </source>
</evidence>
<evidence type="ECO:0000256" key="3">
    <source>
        <dbReference type="SAM" id="MobiDB-lite"/>
    </source>
</evidence>
<evidence type="ECO:0000269" key="4">
    <source>
    </source>
</evidence>
<evidence type="ECO:0000305" key="5"/>
<proteinExistence type="evidence at protein level"/>
<feature type="chain" id="PRO_0000135203" description="Signal recognition particle 19 kDa protein">
    <location>
        <begin position="1"/>
        <end position="136"/>
    </location>
</feature>
<feature type="region of interest" description="Disordered" evidence="3">
    <location>
        <begin position="106"/>
        <end position="136"/>
    </location>
</feature>
<feature type="mutagenesis site" description="Abolishes RNA binding." evidence="4">
    <original>R</original>
    <variation>Q</variation>
    <location>
        <position position="31"/>
    </location>
</feature>
<feature type="mutagenesis site" description="Abolishes RNA binding." evidence="4">
    <original>R</original>
    <variation>Q</variation>
    <location>
        <position position="32"/>
    </location>
</feature>
<protein>
    <recommendedName>
        <fullName>Signal recognition particle 19 kDa protein</fullName>
        <shortName>SRP19</shortName>
    </recommendedName>
</protein>
<name>SRP19_ORYSJ</name>
<comment type="function">
    <text evidence="1">Component of the signal recognition particle (SRP) complex, a ribonucleoprotein complex that mediates the cotranslational targeting of secretory and membrane proteins to the endoplasmic reticulum (ER) (By similarity). Binds directly to 7SL RNA (By similarity). Mediates binding of SRP54 to the SRP complex (By similarity).</text>
</comment>
<comment type="subunit">
    <text evidence="2">Component of a signal recognition particle complex that consists of a 7SL RNA molecule of 300 nucleotides and six protein subunits: SRP72, SRP68, SRP54, SRP19, SRP14 and SRP9.</text>
</comment>
<comment type="subcellular location">
    <subcellularLocation>
        <location evidence="2">Cytoplasm</location>
    </subcellularLocation>
    <subcellularLocation>
        <location evidence="2">Nucleus</location>
        <location evidence="2">Nucleolus</location>
    </subcellularLocation>
</comment>
<comment type="similarity">
    <text evidence="5">Belongs to the SRP19 family.</text>
</comment>
<sequence>MDGGDLRSSIKKWNVIYPVYLNSKKTVAEGRRIASGKACPDPTCVEIADCCSHLKIPHAIELDKAYPRDFFQVGRVRVQLKKDDGSPVNPAIKTKKQLMIQIAELVPKHHGRTKKQEPAASSTAGTSKGKGGKKKK</sequence>
<gene>
    <name type="primary">SRP19</name>
    <name type="ordered locus">Os06g0342100</name>
    <name type="ordered locus">LOC_Os06g23430</name>
    <name type="ORF">P0428A03.35</name>
    <name type="ORF">P0459H02.12</name>
</gene>
<organism>
    <name type="scientific">Oryza sativa subsp. japonica</name>
    <name type="common">Rice</name>
    <dbReference type="NCBI Taxonomy" id="39947"/>
    <lineage>
        <taxon>Eukaryota</taxon>
        <taxon>Viridiplantae</taxon>
        <taxon>Streptophyta</taxon>
        <taxon>Embryophyta</taxon>
        <taxon>Tracheophyta</taxon>
        <taxon>Spermatophyta</taxon>
        <taxon>Magnoliopsida</taxon>
        <taxon>Liliopsida</taxon>
        <taxon>Poales</taxon>
        <taxon>Poaceae</taxon>
        <taxon>BOP clade</taxon>
        <taxon>Oryzoideae</taxon>
        <taxon>Oryzeae</taxon>
        <taxon>Oryzinae</taxon>
        <taxon>Oryza</taxon>
        <taxon>Oryza sativa</taxon>
    </lineage>
</organism>